<proteinExistence type="evidence at protein level"/>
<feature type="chain" id="PRO_0000452724" description="Protein pid-2">
    <location>
        <begin position="1"/>
        <end position="454"/>
    </location>
</feature>
<feature type="region of interest" description="Disordered" evidence="1">
    <location>
        <begin position="31"/>
        <end position="61"/>
    </location>
</feature>
<feature type="compositionally biased region" description="Basic and acidic residues" evidence="1">
    <location>
        <begin position="50"/>
        <end position="61"/>
    </location>
</feature>
<feature type="mutagenesis site" description="In xf23 and gg661; displays a gradual decline of fertility over successive generations, also called a mortal germline phenotype (Mrt). Defective formation of liquid-like condensates in the cytoplasm called Z granules, whereby Z granules are larger in size and there are fewer compared to wild-type. There are fewer pid-4-expressing germ cell foci. Does not affect the number of pid-5-expressing germ cell foci. Defective gene silencing mediated by a class of 21 nucleotide PIWI-interacting RNAs (piRNAs) that possess a uracil residue at the 5'-end (also called 21U-RNAs). Does not reduce the levels of 21U-RNAs. Reduces the levels of secondary and tertiary 22G-siRNAs, which are a class of 22 nucleotide small interfering RNAs (siRNAs) that possess a triphosphorylated guanine residue at the 5'-end. Reduces the levels of 26G-siRNAs, which are a class of 26 nucleotide siRNAs that possess a guanine residue at the 5'-end. Does not reduce the levels of microRNAs (miRNAs). Disrupts inheritance of small RNA-induced gene silencing. Impairs silencing of the DNA transposable element Tc1. Enhances the impaired silencing of the DNA transposable element Tc1 in a hrde-1 tm1200 mutant background. Results in sterility, a high incidence of females phenotype and defective activity of the PIWI-interacting RNA (piRNA) silencing pathway in a pid-1 xf35 mutant background." evidence="2 3">
    <location>
        <begin position="122"/>
        <end position="454"/>
    </location>
</feature>
<feature type="mutagenesis site" description="In gg662; disrupts inheritance of small RNA-induced gene silencing." evidence="3">
    <original>G</original>
    <variation>E</variation>
    <location>
        <position position="210"/>
    </location>
</feature>
<feature type="mutagenesis site" description="In gg663; disrupts inheritance of small RNA-induced gene silencing." evidence="3">
    <original>G</original>
    <variation>E</variation>
    <location>
        <position position="387"/>
    </location>
</feature>
<evidence type="ECO:0000256" key="1">
    <source>
        <dbReference type="SAM" id="MobiDB-lite"/>
    </source>
</evidence>
<evidence type="ECO:0000269" key="2">
    <source>
    </source>
</evidence>
<evidence type="ECO:0000269" key="3">
    <source>
    </source>
</evidence>
<evidence type="ECO:0000303" key="4">
    <source>
    </source>
</evidence>
<evidence type="ECO:0000303" key="5">
    <source>
    </source>
</evidence>
<evidence type="ECO:0000305" key="6"/>
<evidence type="ECO:0000312" key="7">
    <source>
        <dbReference type="Proteomes" id="UP000001940"/>
    </source>
</evidence>
<evidence type="ECO:0000312" key="8">
    <source>
        <dbReference type="WormBase" id="Y48G1C.1"/>
    </source>
</evidence>
<accession>Q9N3P1</accession>
<sequence>MTVIIASHWGPQSKQMLPPEPPRIILREVPVQNNQKEHPPVQEIKTVSSKSKEHRVSSSRKIPDHFDVGPRFYMNVPADGSEVFEDDEKDVENECWAVIERIGSEDDKFEASELVEYRDHDWYIALAINKEKTPDKANYQHLLYSYRGGIQRIILTPQQTDSIDKTPLVKYKIIGDGLYEVLPIHSSLPQTGLISPKYRYNKGVELRIFGIVNWIDFVLDDDHQTHRTMVWTDAVGPIYLSAADRANIRRKLLLTEMQIFAPLRMCHITVKAEFNFSIPDGSPIQWTISSFQPLIEESEKDPNIGRNLWPARVLRFDDLVVTKKTPNGYWLKSQRLEGHVNVFAGANQIGIIESAGEKYATKGSMMAFVVPCYQNSTFAYFEALIAGPPRVVMIITEGRFLNYCPKTWPPSVRKMRDQYQKEHVLKSEVRSSPICMKQPDYCLKSLRGFSECPF</sequence>
<name>PID2_CAEEL</name>
<comment type="function">
    <text evidence="2 3">Involved in gene silencing mediated by a class of 21 nucleotide PIWI-interacting RNAs (piRNAs) that possess a uracil residue at the 5'-end (also called 21U-RNAs) and that guide the Piwi protein prg-1 to its DNA targets for silencing (PubMed:33231880, PubMed:33438773). Not required for the biogenesis of 21U-RNAs (PubMed:33231880). May also be involved in gene silencing mediated by 22G-siRNAs (a class of 22 nucleotide endogenous small interfering RNAs (siRNAs) that possess a triphosphorylated guanine residue at the 5'-end) and 26G-siRNAs (a class of 26 nucleotide siRNAs that possess a guanine residue at the 5'-end) (PubMed:33231880). Required for the biogenesis of secondary and tertiary 22G-siRNAs from many loci (PubMed:33231880). Specifically, promotes the production of 22G-siRNAs from the 5' end of target mRNAs (PubMed:33231880). May play a role in the production of 26G-siRNAs (PubMed:33231880). Plays a role in small RNA-directed transgenerational epigenetic inheritance (also called RNAe) over several generations and germline immortality (PubMed:33231880, PubMed:33438773). Together with the argonaut protein hrde-1, promotes the silencing of the DNA transposable element Tc1 (PubMed:33231880). Required for the formation of liquid-like condensates in the cytoplasm called Z granules, playing a role in maintaining their assembly, viscosity and morphology in adult germ cells, and localization in early embryos (PubMed:33231880, PubMed:33438773).</text>
</comment>
<comment type="subunit">
    <text evidence="2">May interact with pid-4, pid-5, app-1 and prmt-5.</text>
</comment>
<comment type="subcellular location">
    <subcellularLocation>
        <location evidence="2 3">Cytoplasm</location>
        <location evidence="2 3">Perinuclear region</location>
    </subcellularLocation>
    <subcellularLocation>
        <location evidence="3">Cytoplasmic granule</location>
    </subcellularLocation>
    <text evidence="2 3">Localizes to perinuclear granules, adjacent to P granules in adult germ cells (PubMed:33231880, PubMed:33438773). These perinuclear granules segregate with germline blastomeres during embryonic development (PubMed:33438773). Localizes to the outer periphery of Z granules, which are liquid-like condensates in the cytoplasm (PubMed:33438773).</text>
</comment>
<comment type="tissue specificity">
    <text evidence="3">Expressed throughout the mitotic and meiotic regions of the germline and in oocytes.</text>
</comment>
<comment type="developmental stage">
    <text evidence="2 3">Expressed in two cell, 4 cell and 300 cell embryos and in the primordial germ cells, Z2 and Z3 (PubMed:33438773). Expressed in the pachytene stage of the meiotic region of L4 larvae (PubMed:33231880). Expressed in germ cells of L4 larvae (PubMed:33231880).</text>
</comment>
<gene>
    <name evidence="4 8" type="primary">pid-2</name>
    <name evidence="5" type="synonym">zsp-1</name>
    <name evidence="8" type="ORF">Y48G1C.1</name>
</gene>
<dbReference type="EMBL" id="BX284601">
    <property type="protein sequence ID" value="CCD71722.1"/>
    <property type="molecule type" value="Genomic_DNA"/>
</dbReference>
<dbReference type="RefSeq" id="NP_490672.2">
    <property type="nucleotide sequence ID" value="NM_058271.7"/>
</dbReference>
<dbReference type="DIP" id="DIP-24833N"/>
<dbReference type="FunCoup" id="Q9N3P1">
    <property type="interactions" value="1360"/>
</dbReference>
<dbReference type="IntAct" id="Q9N3P1">
    <property type="interactions" value="3"/>
</dbReference>
<dbReference type="STRING" id="6239.Y48G1C.1.1"/>
<dbReference type="PaxDb" id="6239-Y48G1C.1"/>
<dbReference type="PeptideAtlas" id="Q9N3P1"/>
<dbReference type="EnsemblMetazoa" id="Y48G1C.1.1">
    <property type="protein sequence ID" value="Y48G1C.1.1"/>
    <property type="gene ID" value="WBGene00021676"/>
</dbReference>
<dbReference type="GeneID" id="171599"/>
<dbReference type="KEGG" id="cel:CELE_Y48G1C.1"/>
<dbReference type="UCSC" id="Y48G1C.1">
    <property type="organism name" value="c. elegans"/>
</dbReference>
<dbReference type="AGR" id="WB:WBGene00021676"/>
<dbReference type="CTD" id="171599"/>
<dbReference type="WormBase" id="Y48G1C.1">
    <property type="protein sequence ID" value="CE30019"/>
    <property type="gene ID" value="WBGene00021676"/>
    <property type="gene designation" value="pid-2"/>
</dbReference>
<dbReference type="eggNOG" id="ENOG502RT5Y">
    <property type="taxonomic scope" value="Eukaryota"/>
</dbReference>
<dbReference type="HOGENOM" id="CLU_571401_0_0_1"/>
<dbReference type="InParanoid" id="Q9N3P1"/>
<dbReference type="OMA" id="CPKTWPP"/>
<dbReference type="OrthoDB" id="5800048at2759"/>
<dbReference type="CD-CODE" id="060EE9EF">
    <property type="entry name" value="Z-granule"/>
</dbReference>
<dbReference type="PRO" id="PR:Q9N3P1"/>
<dbReference type="Proteomes" id="UP000001940">
    <property type="component" value="Chromosome I"/>
</dbReference>
<dbReference type="Bgee" id="WBGene00021676">
    <property type="expression patterns" value="Expressed in germ line (C elegans) and 4 other cell types or tissues"/>
</dbReference>
<dbReference type="GO" id="GO:0048471">
    <property type="term" value="C:perinuclear region of cytoplasm"/>
    <property type="evidence" value="ECO:0007669"/>
    <property type="project" value="UniProtKB-SubCell"/>
</dbReference>
<dbReference type="GO" id="GO:0031047">
    <property type="term" value="P:regulatory ncRNA-mediated gene silencing"/>
    <property type="evidence" value="ECO:0007669"/>
    <property type="project" value="UniProtKB-KW"/>
</dbReference>
<keyword id="KW-0963">Cytoplasm</keyword>
<keyword id="KW-1185">Reference proteome</keyword>
<keyword id="KW-0943">RNA-mediated gene silencing</keyword>
<protein>
    <recommendedName>
        <fullName evidence="6">Protein pid-2</fullName>
    </recommendedName>
    <alternativeName>
        <fullName evidence="5">Z granule surface protein 1</fullName>
    </alternativeName>
    <alternativeName>
        <fullName evidence="8">piRNA-induced silencing defective protein 2</fullName>
    </alternativeName>
</protein>
<organism evidence="7">
    <name type="scientific">Caenorhabditis elegans</name>
    <dbReference type="NCBI Taxonomy" id="6239"/>
    <lineage>
        <taxon>Eukaryota</taxon>
        <taxon>Metazoa</taxon>
        <taxon>Ecdysozoa</taxon>
        <taxon>Nematoda</taxon>
        <taxon>Chromadorea</taxon>
        <taxon>Rhabditida</taxon>
        <taxon>Rhabditina</taxon>
        <taxon>Rhabditomorpha</taxon>
        <taxon>Rhabditoidea</taxon>
        <taxon>Rhabditidae</taxon>
        <taxon>Peloderinae</taxon>
        <taxon>Caenorhabditis</taxon>
    </lineage>
</organism>
<reference evidence="7" key="1">
    <citation type="journal article" date="1998" name="Science">
        <title>Genome sequence of the nematode C. elegans: a platform for investigating biology.</title>
        <authorList>
            <consortium name="The C. elegans sequencing consortium"/>
        </authorList>
    </citation>
    <scope>NUCLEOTIDE SEQUENCE [LARGE SCALE GENOMIC DNA]</scope>
    <source>
        <strain evidence="7">Bristol N2</strain>
    </source>
</reference>
<reference evidence="6" key="2">
    <citation type="journal article" date="2021" name="EMBO J.">
        <title>ZSP-1 is a Z granule surface protein required for Z granule fluidity and germline immortality in Caenorhabditis elegans.</title>
        <authorList>
            <person name="Wan G."/>
            <person name="Bajaj L."/>
            <person name="Fields B."/>
            <person name="Dodson A.E."/>
            <person name="Pagano D."/>
            <person name="Fei Y."/>
            <person name="Kennedy S."/>
        </authorList>
    </citation>
    <scope>FUNCTION</scope>
    <scope>SUBCELLULAR LOCATION</scope>
    <scope>TISSUE SPECIFICITY</scope>
    <scope>DEVELOPMENTAL STAGE</scope>
    <scope>MUTAGENESIS OF 122-TRP--PHE-454; GLY-210 AND GLY-387</scope>
</reference>
<reference evidence="6" key="3">
    <citation type="journal article" date="2021" name="EMBO J.">
        <title>Intrinsically disordered protein PID-2 modulates Z granules and is required for heritable piRNA-induced silencing in the Caenorhabditis elegans embryo.</title>
        <authorList>
            <person name="Placentino M."/>
            <person name="de Jesus Domingues A.M."/>
            <person name="Schreier J."/>
            <person name="Dietz S."/>
            <person name="Hellmann S."/>
            <person name="de Albuquerque B.F."/>
            <person name="Butter F."/>
            <person name="Ketting R.F."/>
        </authorList>
    </citation>
    <scope>FUNCTION</scope>
    <scope>INTERACTION WITH PID-4; PID-5; APP-1 AND PRMT-5</scope>
    <scope>SUBCELLULAR LOCATION</scope>
    <scope>DEVELOPMENTAL STAGE</scope>
    <scope>MUTAGENESIS OF 122-TRP--PHE-454</scope>
</reference>